<reference key="1">
    <citation type="submission" date="2008-02" db="EMBL/GenBank/DDBJ databases">
        <title>Complete sequence of Shewanella woodyi ATCC 51908.</title>
        <authorList>
            <consortium name="US DOE Joint Genome Institute"/>
            <person name="Copeland A."/>
            <person name="Lucas S."/>
            <person name="Lapidus A."/>
            <person name="Glavina del Rio T."/>
            <person name="Dalin E."/>
            <person name="Tice H."/>
            <person name="Bruce D."/>
            <person name="Goodwin L."/>
            <person name="Pitluck S."/>
            <person name="Sims D."/>
            <person name="Brettin T."/>
            <person name="Detter J.C."/>
            <person name="Han C."/>
            <person name="Kuske C.R."/>
            <person name="Schmutz J."/>
            <person name="Larimer F."/>
            <person name="Land M."/>
            <person name="Hauser L."/>
            <person name="Kyrpides N."/>
            <person name="Lykidis A."/>
            <person name="Zhao J.-S."/>
            <person name="Richardson P."/>
        </authorList>
    </citation>
    <scope>NUCLEOTIDE SEQUENCE [LARGE SCALE GENOMIC DNA]</scope>
    <source>
        <strain>ATCC 51908 / MS32</strain>
    </source>
</reference>
<proteinExistence type="inferred from homology"/>
<evidence type="ECO:0000255" key="1">
    <source>
        <dbReference type="HAMAP-Rule" id="MF_00133"/>
    </source>
</evidence>
<gene>
    <name evidence="1" type="primary">trpB</name>
    <name type="ordered locus">Swoo_2916</name>
</gene>
<feature type="chain" id="PRO_1000095823" description="Tryptophan synthase beta chain">
    <location>
        <begin position="1"/>
        <end position="407"/>
    </location>
</feature>
<feature type="modified residue" description="N6-(pyridoxal phosphate)lysine" evidence="1">
    <location>
        <position position="86"/>
    </location>
</feature>
<sequence length="407" mass="44012">MTKLDPYFGEYGGMYVPQILMPALKQLETAFVEAQEDEAFKTEFNDLLKNYAGRPTALTLTRNLSPNPLVKIYLKREDLLHGGAHKTNQVLGQALLAKRMGKKEIIAETGAGQHGVATALACALLDLKCKVYMGAKDVERQSPNVFRMKLMGAEVIPVTSGSSTLKDACNEAMRDWSGSYDKAHYLLGTAAGPHPFPTIVREFQRMIGAETKKQILEREGRLPDAVIACVGGGSNAIGMFADFIDEESVKLIGVEPAGLGIDTPMHGAPLKHGKTGIFFGMKAPLMQDREGQIEESYSISAGLDFPSVGPQHAHLAATGRATYESATDDEALEAFQLLARSEGIIPALESAHALAYAVKMAKAATQETILVVNLSGRGDKDIFTVADILEERERSQTGQQKEESGND</sequence>
<name>TRPB_SHEWM</name>
<protein>
    <recommendedName>
        <fullName evidence="1">Tryptophan synthase beta chain</fullName>
        <ecNumber evidence="1">4.2.1.20</ecNumber>
    </recommendedName>
</protein>
<comment type="function">
    <text evidence="1">The beta subunit is responsible for the synthesis of L-tryptophan from indole and L-serine.</text>
</comment>
<comment type="catalytic activity">
    <reaction evidence="1">
        <text>(1S,2R)-1-C-(indol-3-yl)glycerol 3-phosphate + L-serine = D-glyceraldehyde 3-phosphate + L-tryptophan + H2O</text>
        <dbReference type="Rhea" id="RHEA:10532"/>
        <dbReference type="ChEBI" id="CHEBI:15377"/>
        <dbReference type="ChEBI" id="CHEBI:33384"/>
        <dbReference type="ChEBI" id="CHEBI:57912"/>
        <dbReference type="ChEBI" id="CHEBI:58866"/>
        <dbReference type="ChEBI" id="CHEBI:59776"/>
        <dbReference type="EC" id="4.2.1.20"/>
    </reaction>
</comment>
<comment type="cofactor">
    <cofactor evidence="1">
        <name>pyridoxal 5'-phosphate</name>
        <dbReference type="ChEBI" id="CHEBI:597326"/>
    </cofactor>
</comment>
<comment type="pathway">
    <text evidence="1">Amino-acid biosynthesis; L-tryptophan biosynthesis; L-tryptophan from chorismate: step 5/5.</text>
</comment>
<comment type="subunit">
    <text evidence="1">Tetramer of two alpha and two beta chains.</text>
</comment>
<comment type="similarity">
    <text evidence="1">Belongs to the TrpB family.</text>
</comment>
<organism>
    <name type="scientific">Shewanella woodyi (strain ATCC 51908 / MS32)</name>
    <dbReference type="NCBI Taxonomy" id="392500"/>
    <lineage>
        <taxon>Bacteria</taxon>
        <taxon>Pseudomonadati</taxon>
        <taxon>Pseudomonadota</taxon>
        <taxon>Gammaproteobacteria</taxon>
        <taxon>Alteromonadales</taxon>
        <taxon>Shewanellaceae</taxon>
        <taxon>Shewanella</taxon>
    </lineage>
</organism>
<keyword id="KW-0028">Amino-acid biosynthesis</keyword>
<keyword id="KW-0057">Aromatic amino acid biosynthesis</keyword>
<keyword id="KW-0456">Lyase</keyword>
<keyword id="KW-0663">Pyridoxal phosphate</keyword>
<keyword id="KW-1185">Reference proteome</keyword>
<keyword id="KW-0822">Tryptophan biosynthesis</keyword>
<accession>B1KK02</accession>
<dbReference type="EC" id="4.2.1.20" evidence="1"/>
<dbReference type="EMBL" id="CP000961">
    <property type="protein sequence ID" value="ACA87189.1"/>
    <property type="molecule type" value="Genomic_DNA"/>
</dbReference>
<dbReference type="RefSeq" id="WP_012325525.1">
    <property type="nucleotide sequence ID" value="NC_010506.1"/>
</dbReference>
<dbReference type="SMR" id="B1KK02"/>
<dbReference type="STRING" id="392500.Swoo_2916"/>
<dbReference type="KEGG" id="swd:Swoo_2916"/>
<dbReference type="eggNOG" id="COG0133">
    <property type="taxonomic scope" value="Bacteria"/>
</dbReference>
<dbReference type="HOGENOM" id="CLU_016734_3_1_6"/>
<dbReference type="UniPathway" id="UPA00035">
    <property type="reaction ID" value="UER00044"/>
</dbReference>
<dbReference type="Proteomes" id="UP000002168">
    <property type="component" value="Chromosome"/>
</dbReference>
<dbReference type="GO" id="GO:0005737">
    <property type="term" value="C:cytoplasm"/>
    <property type="evidence" value="ECO:0007669"/>
    <property type="project" value="TreeGrafter"/>
</dbReference>
<dbReference type="GO" id="GO:0004834">
    <property type="term" value="F:tryptophan synthase activity"/>
    <property type="evidence" value="ECO:0007669"/>
    <property type="project" value="UniProtKB-UniRule"/>
</dbReference>
<dbReference type="CDD" id="cd06446">
    <property type="entry name" value="Trp-synth_B"/>
    <property type="match status" value="1"/>
</dbReference>
<dbReference type="FunFam" id="3.40.50.1100:FF:000001">
    <property type="entry name" value="Tryptophan synthase beta chain"/>
    <property type="match status" value="1"/>
</dbReference>
<dbReference type="FunFam" id="3.40.50.1100:FF:000004">
    <property type="entry name" value="Tryptophan synthase beta chain"/>
    <property type="match status" value="1"/>
</dbReference>
<dbReference type="Gene3D" id="3.40.50.1100">
    <property type="match status" value="2"/>
</dbReference>
<dbReference type="HAMAP" id="MF_00133">
    <property type="entry name" value="Trp_synth_beta"/>
    <property type="match status" value="1"/>
</dbReference>
<dbReference type="InterPro" id="IPR006653">
    <property type="entry name" value="Trp_synth_b_CS"/>
</dbReference>
<dbReference type="InterPro" id="IPR006654">
    <property type="entry name" value="Trp_synth_beta"/>
</dbReference>
<dbReference type="InterPro" id="IPR023026">
    <property type="entry name" value="Trp_synth_beta/beta-like"/>
</dbReference>
<dbReference type="InterPro" id="IPR001926">
    <property type="entry name" value="TrpB-like_PALP"/>
</dbReference>
<dbReference type="InterPro" id="IPR036052">
    <property type="entry name" value="TrpB-like_PALP_sf"/>
</dbReference>
<dbReference type="NCBIfam" id="TIGR00263">
    <property type="entry name" value="trpB"/>
    <property type="match status" value="1"/>
</dbReference>
<dbReference type="PANTHER" id="PTHR48077:SF3">
    <property type="entry name" value="TRYPTOPHAN SYNTHASE"/>
    <property type="match status" value="1"/>
</dbReference>
<dbReference type="PANTHER" id="PTHR48077">
    <property type="entry name" value="TRYPTOPHAN SYNTHASE-RELATED"/>
    <property type="match status" value="1"/>
</dbReference>
<dbReference type="Pfam" id="PF00291">
    <property type="entry name" value="PALP"/>
    <property type="match status" value="1"/>
</dbReference>
<dbReference type="PIRSF" id="PIRSF001413">
    <property type="entry name" value="Trp_syn_beta"/>
    <property type="match status" value="1"/>
</dbReference>
<dbReference type="SUPFAM" id="SSF53686">
    <property type="entry name" value="Tryptophan synthase beta subunit-like PLP-dependent enzymes"/>
    <property type="match status" value="1"/>
</dbReference>
<dbReference type="PROSITE" id="PS00168">
    <property type="entry name" value="TRP_SYNTHASE_BETA"/>
    <property type="match status" value="1"/>
</dbReference>